<dbReference type="EMBL" id="MH233112">
    <property type="protein sequence ID" value="AXL95295.1"/>
    <property type="molecule type" value="mRNA"/>
</dbReference>
<dbReference type="SMR" id="A0A346CIB2"/>
<dbReference type="GO" id="GO:0005576">
    <property type="term" value="C:extracellular region"/>
    <property type="evidence" value="ECO:0007669"/>
    <property type="project" value="UniProtKB-SubCell"/>
</dbReference>
<dbReference type="GO" id="GO:0090729">
    <property type="term" value="F:toxin activity"/>
    <property type="evidence" value="ECO:0007669"/>
    <property type="project" value="UniProtKB-KW"/>
</dbReference>
<dbReference type="CDD" id="cd00206">
    <property type="entry name" value="TFP_snake_toxin"/>
    <property type="match status" value="1"/>
</dbReference>
<dbReference type="Gene3D" id="2.10.60.10">
    <property type="entry name" value="CD59"/>
    <property type="match status" value="1"/>
</dbReference>
<dbReference type="InterPro" id="IPR003571">
    <property type="entry name" value="Snake_3FTx"/>
</dbReference>
<dbReference type="InterPro" id="IPR045860">
    <property type="entry name" value="Snake_toxin-like_sf"/>
</dbReference>
<dbReference type="InterPro" id="IPR018354">
    <property type="entry name" value="Snake_toxin_con_site"/>
</dbReference>
<dbReference type="InterPro" id="IPR054131">
    <property type="entry name" value="Toxin_cobra-type"/>
</dbReference>
<dbReference type="Pfam" id="PF21947">
    <property type="entry name" value="Toxin_cobra-type"/>
    <property type="match status" value="1"/>
</dbReference>
<dbReference type="SUPFAM" id="SSF57302">
    <property type="entry name" value="Snake toxin-like"/>
    <property type="match status" value="1"/>
</dbReference>
<dbReference type="PROSITE" id="PS00272">
    <property type="entry name" value="SNAKE_TOXIN"/>
    <property type="match status" value="1"/>
</dbReference>
<name>3NB1_SPISL</name>
<proteinExistence type="evidence at protein level"/>
<keyword id="KW-1015">Disulfide bond</keyword>
<keyword id="KW-0528">Neurotoxin</keyword>
<keyword id="KW-0964">Secreted</keyword>
<keyword id="KW-0732">Signal</keyword>
<keyword id="KW-0800">Toxin</keyword>
<sequence length="107" mass="11965">MKTLLLALAVVVLVCLGSANELGLGRQRVDRRRRQAVGAPYGLCFQCNQKSSRDCLNPKRCPYFHRTCYTLYNSGGQWTVKGCAKMCPTAGPNERVKCCYKPECNND</sequence>
<accession>A0A346CIB2</accession>
<protein>
    <recommendedName>
        <fullName evidence="4">Sulmotoxin 1</fullName>
    </recommendedName>
    <alternativeName>
        <fullName evidence="4">S.sulphureus monomeric toxin</fullName>
    </alternativeName>
    <alternativeName>
        <fullName evidence="7">Three-finger toxin 2</fullName>
    </alternativeName>
</protein>
<feature type="signal peptide" evidence="2">
    <location>
        <begin position="1"/>
        <end position="19"/>
    </location>
</feature>
<feature type="propeptide" id="PRO_0000461202" evidence="5">
    <location>
        <begin position="20"/>
        <end position="34"/>
    </location>
</feature>
<feature type="chain" id="PRO_5016856199" description="Sulmotoxin 1">
    <location>
        <begin position="35"/>
        <end position="107"/>
    </location>
</feature>
<feature type="disulfide bond" evidence="1">
    <location>
        <begin position="44"/>
        <end position="68"/>
    </location>
</feature>
<feature type="disulfide bond" evidence="1">
    <location>
        <begin position="47"/>
        <end position="55"/>
    </location>
</feature>
<feature type="disulfide bond" evidence="1">
    <location>
        <begin position="61"/>
        <end position="83"/>
    </location>
</feature>
<feature type="disulfide bond" evidence="1">
    <location>
        <begin position="87"/>
        <end position="98"/>
    </location>
</feature>
<feature type="disulfide bond" evidence="1">
    <location>
        <begin position="99"/>
        <end position="104"/>
    </location>
</feature>
<evidence type="ECO:0000250" key="1">
    <source>
        <dbReference type="UniProtKB" id="A0S865"/>
    </source>
</evidence>
<evidence type="ECO:0000255" key="2"/>
<evidence type="ECO:0000269" key="3">
    <source>
    </source>
</evidence>
<evidence type="ECO:0000303" key="4">
    <source>
    </source>
</evidence>
<evidence type="ECO:0000305" key="5"/>
<evidence type="ECO:0000305" key="6">
    <source>
    </source>
</evidence>
<evidence type="ECO:0000312" key="7">
    <source>
        <dbReference type="EMBL" id="AXL95295.1"/>
    </source>
</evidence>
<reference evidence="7" key="1">
    <citation type="journal article" date="2018" name="Proc. R. Soc. B">
        <title>Adaptive evolution of distinct prey-specific toxin genes in rear-fanged snake venom.</title>
        <authorList>
            <person name="Modahl C.M."/>
            <person name="Mrinalini F.S."/>
            <person name="Mackessy S.P."/>
        </authorList>
    </citation>
    <scope>NUCLEOTIDE SEQUENCE [MRNA]</scope>
    <scope>FUNCTION</scope>
    <scope>SUBCELLULAR LOCATION</scope>
    <scope>SUBUNIT</scope>
    <scope>TOXIC DOSE</scope>
    <scope>BIOASSAY</scope>
    <source>
        <tissue>Venom</tissue>
        <tissue>Venom gland</tissue>
    </source>
</reference>
<reference key="2">
    <citation type="journal article" date="2018" name="Proc. R. Soc. B">
        <authorList>
            <person name="Modahl C.M."/>
            <person name="Mrinalini F.S."/>
            <person name="Mackessy S.P."/>
        </authorList>
    </citation>
    <scope>ERRATUM OF PUBMED:30068680</scope>
</reference>
<comment type="function">
    <text evidence="3">Mammal-specific neurotoxin (tested on mice) (PubMed:30068680). Not toxic to lizards (tested on geckos) (PubMed:30068680).</text>
</comment>
<comment type="subunit">
    <text evidence="3">Monomer.</text>
</comment>
<comment type="subcellular location">
    <subcellularLocation>
        <location evidence="3">Secreted</location>
    </subcellularLocation>
</comment>
<comment type="tissue specificity">
    <text evidence="6">Expressed by the venom gland.</text>
</comment>
<comment type="toxic dose">
    <text evidence="3">LD(50) is about 4 mg/kg by intraperitoneal injection in mice.</text>
</comment>
<comment type="similarity">
    <text evidence="5">Belongs to the three-finger toxin family. Ancestral subfamily. Boigatoxin sub-subfamily.</text>
</comment>
<organism>
    <name type="scientific">Spilotes sulphureus</name>
    <name type="common">Amazon puffing snake</name>
    <name type="synonym">Natrix sulphurea</name>
    <dbReference type="NCBI Taxonomy" id="1899469"/>
    <lineage>
        <taxon>Eukaryota</taxon>
        <taxon>Metazoa</taxon>
        <taxon>Chordata</taxon>
        <taxon>Craniata</taxon>
        <taxon>Vertebrata</taxon>
        <taxon>Euteleostomi</taxon>
        <taxon>Lepidosauria</taxon>
        <taxon>Squamata</taxon>
        <taxon>Bifurcata</taxon>
        <taxon>Unidentata</taxon>
        <taxon>Episquamata</taxon>
        <taxon>Toxicofera</taxon>
        <taxon>Serpentes</taxon>
        <taxon>Colubroidea</taxon>
        <taxon>Colubridae</taxon>
        <taxon>Colubrinae</taxon>
        <taxon>Spilotes</taxon>
    </lineage>
</organism>